<accession>Q2RNA4</accession>
<gene>
    <name evidence="1" type="primary">hisB</name>
    <name type="ordered locus">Rru_A3597</name>
</gene>
<comment type="catalytic activity">
    <reaction evidence="1">
        <text>D-erythro-1-(imidazol-4-yl)glycerol 3-phosphate = 3-(imidazol-4-yl)-2-oxopropyl phosphate + H2O</text>
        <dbReference type="Rhea" id="RHEA:11040"/>
        <dbReference type="ChEBI" id="CHEBI:15377"/>
        <dbReference type="ChEBI" id="CHEBI:57766"/>
        <dbReference type="ChEBI" id="CHEBI:58278"/>
        <dbReference type="EC" id="4.2.1.19"/>
    </reaction>
</comment>
<comment type="pathway">
    <text evidence="1">Amino-acid biosynthesis; L-histidine biosynthesis; L-histidine from 5-phospho-alpha-D-ribose 1-diphosphate: step 6/9.</text>
</comment>
<comment type="subcellular location">
    <subcellularLocation>
        <location evidence="1">Cytoplasm</location>
    </subcellularLocation>
</comment>
<comment type="similarity">
    <text evidence="1">Belongs to the imidazoleglycerol-phosphate dehydratase family.</text>
</comment>
<dbReference type="EC" id="4.2.1.19" evidence="1"/>
<dbReference type="EMBL" id="CP000230">
    <property type="protein sequence ID" value="ABC24391.1"/>
    <property type="molecule type" value="Genomic_DNA"/>
</dbReference>
<dbReference type="RefSeq" id="WP_011391344.1">
    <property type="nucleotide sequence ID" value="NC_007643.1"/>
</dbReference>
<dbReference type="RefSeq" id="YP_428678.1">
    <property type="nucleotide sequence ID" value="NC_007643.1"/>
</dbReference>
<dbReference type="SMR" id="Q2RNA4"/>
<dbReference type="STRING" id="269796.Rru_A3597"/>
<dbReference type="EnsemblBacteria" id="ABC24391">
    <property type="protein sequence ID" value="ABC24391"/>
    <property type="gene ID" value="Rru_A3597"/>
</dbReference>
<dbReference type="KEGG" id="rru:Rru_A3597"/>
<dbReference type="PATRIC" id="fig|269796.9.peg.3718"/>
<dbReference type="eggNOG" id="COG0131">
    <property type="taxonomic scope" value="Bacteria"/>
</dbReference>
<dbReference type="HOGENOM" id="CLU_044308_2_0_5"/>
<dbReference type="PhylomeDB" id="Q2RNA4"/>
<dbReference type="UniPathway" id="UPA00031">
    <property type="reaction ID" value="UER00011"/>
</dbReference>
<dbReference type="Proteomes" id="UP000001929">
    <property type="component" value="Chromosome"/>
</dbReference>
<dbReference type="GO" id="GO:0005737">
    <property type="term" value="C:cytoplasm"/>
    <property type="evidence" value="ECO:0007669"/>
    <property type="project" value="UniProtKB-SubCell"/>
</dbReference>
<dbReference type="GO" id="GO:0004424">
    <property type="term" value="F:imidazoleglycerol-phosphate dehydratase activity"/>
    <property type="evidence" value="ECO:0007669"/>
    <property type="project" value="UniProtKB-UniRule"/>
</dbReference>
<dbReference type="GO" id="GO:0000105">
    <property type="term" value="P:L-histidine biosynthetic process"/>
    <property type="evidence" value="ECO:0007669"/>
    <property type="project" value="UniProtKB-UniRule"/>
</dbReference>
<dbReference type="CDD" id="cd07914">
    <property type="entry name" value="IGPD"/>
    <property type="match status" value="1"/>
</dbReference>
<dbReference type="FunFam" id="3.30.230.40:FF:000001">
    <property type="entry name" value="Imidazoleglycerol-phosphate dehydratase HisB"/>
    <property type="match status" value="1"/>
</dbReference>
<dbReference type="FunFam" id="3.30.230.40:FF:000003">
    <property type="entry name" value="Imidazoleglycerol-phosphate dehydratase HisB"/>
    <property type="match status" value="1"/>
</dbReference>
<dbReference type="Gene3D" id="3.30.230.40">
    <property type="entry name" value="Imidazole glycerol phosphate dehydratase, domain 1"/>
    <property type="match status" value="2"/>
</dbReference>
<dbReference type="HAMAP" id="MF_00076">
    <property type="entry name" value="HisB"/>
    <property type="match status" value="1"/>
</dbReference>
<dbReference type="InterPro" id="IPR038494">
    <property type="entry name" value="IGPD_sf"/>
</dbReference>
<dbReference type="InterPro" id="IPR000807">
    <property type="entry name" value="ImidazoleglycerolP_deHydtase"/>
</dbReference>
<dbReference type="InterPro" id="IPR020565">
    <property type="entry name" value="ImidazoleglycerP_deHydtase_CS"/>
</dbReference>
<dbReference type="InterPro" id="IPR020568">
    <property type="entry name" value="Ribosomal_Su5_D2-typ_SF"/>
</dbReference>
<dbReference type="NCBIfam" id="NF002109">
    <property type="entry name" value="PRK00951.1-5"/>
    <property type="match status" value="1"/>
</dbReference>
<dbReference type="NCBIfam" id="NF002111">
    <property type="entry name" value="PRK00951.2-1"/>
    <property type="match status" value="1"/>
</dbReference>
<dbReference type="NCBIfam" id="NF002114">
    <property type="entry name" value="PRK00951.2-4"/>
    <property type="match status" value="1"/>
</dbReference>
<dbReference type="PANTHER" id="PTHR23133:SF2">
    <property type="entry name" value="IMIDAZOLEGLYCEROL-PHOSPHATE DEHYDRATASE"/>
    <property type="match status" value="1"/>
</dbReference>
<dbReference type="PANTHER" id="PTHR23133">
    <property type="entry name" value="IMIDAZOLEGLYCEROL-PHOSPHATE DEHYDRATASE HIS7"/>
    <property type="match status" value="1"/>
</dbReference>
<dbReference type="Pfam" id="PF00475">
    <property type="entry name" value="IGPD"/>
    <property type="match status" value="1"/>
</dbReference>
<dbReference type="SUPFAM" id="SSF54211">
    <property type="entry name" value="Ribosomal protein S5 domain 2-like"/>
    <property type="match status" value="2"/>
</dbReference>
<dbReference type="PROSITE" id="PS00954">
    <property type="entry name" value="IGP_DEHYDRATASE_1"/>
    <property type="match status" value="1"/>
</dbReference>
<dbReference type="PROSITE" id="PS00955">
    <property type="entry name" value="IGP_DEHYDRATASE_2"/>
    <property type="match status" value="1"/>
</dbReference>
<organism>
    <name type="scientific">Rhodospirillum rubrum (strain ATCC 11170 / ATH 1.1.1 / DSM 467 / LMG 4362 / NCIMB 8255 / S1)</name>
    <dbReference type="NCBI Taxonomy" id="269796"/>
    <lineage>
        <taxon>Bacteria</taxon>
        <taxon>Pseudomonadati</taxon>
        <taxon>Pseudomonadota</taxon>
        <taxon>Alphaproteobacteria</taxon>
        <taxon>Rhodospirillales</taxon>
        <taxon>Rhodospirillaceae</taxon>
        <taxon>Rhodospirillum</taxon>
    </lineage>
</organism>
<reference key="1">
    <citation type="journal article" date="2011" name="Stand. Genomic Sci.">
        <title>Complete genome sequence of Rhodospirillum rubrum type strain (S1).</title>
        <authorList>
            <person name="Munk A.C."/>
            <person name="Copeland A."/>
            <person name="Lucas S."/>
            <person name="Lapidus A."/>
            <person name="Del Rio T.G."/>
            <person name="Barry K."/>
            <person name="Detter J.C."/>
            <person name="Hammon N."/>
            <person name="Israni S."/>
            <person name="Pitluck S."/>
            <person name="Brettin T."/>
            <person name="Bruce D."/>
            <person name="Han C."/>
            <person name="Tapia R."/>
            <person name="Gilna P."/>
            <person name="Schmutz J."/>
            <person name="Larimer F."/>
            <person name="Land M."/>
            <person name="Kyrpides N.C."/>
            <person name="Mavromatis K."/>
            <person name="Richardson P."/>
            <person name="Rohde M."/>
            <person name="Goeker M."/>
            <person name="Klenk H.P."/>
            <person name="Zhang Y."/>
            <person name="Roberts G.P."/>
            <person name="Reslewic S."/>
            <person name="Schwartz D.C."/>
        </authorList>
    </citation>
    <scope>NUCLEOTIDE SEQUENCE [LARGE SCALE GENOMIC DNA]</scope>
    <source>
        <strain>ATCC 11170 / ATH 1.1.1 / DSM 467 / LMG 4362 / NCIMB 8255 / S1</strain>
    </source>
</reference>
<proteinExistence type="inferred from homology"/>
<sequence length="199" mass="22204">MRQATVTRATKETEITVWLDLDGTGQYEVSTGIGFLDHMLEQVSRHSLMDLRVHAKGDTHIDFHHTTEDTGLAIGQAVTQALGDRKGIQRYGSALIPMDEALTQVAVDLSNRPYLIWKVDFSRDKLGDMDTELFKEWFQAFSQTAGVTLHVANHYGENNHHIVESCYKALARALRQAWEIDPRKADAVPSTKGVLGGTL</sequence>
<protein>
    <recommendedName>
        <fullName evidence="1">Imidazoleglycerol-phosphate dehydratase</fullName>
        <shortName evidence="1">IGPD</shortName>
        <ecNumber evidence="1">4.2.1.19</ecNumber>
    </recommendedName>
</protein>
<feature type="chain" id="PRO_1000010345" description="Imidazoleglycerol-phosphate dehydratase">
    <location>
        <begin position="1"/>
        <end position="199"/>
    </location>
</feature>
<name>HIS7_RHORT</name>
<evidence type="ECO:0000255" key="1">
    <source>
        <dbReference type="HAMAP-Rule" id="MF_00076"/>
    </source>
</evidence>
<keyword id="KW-0028">Amino-acid biosynthesis</keyword>
<keyword id="KW-0963">Cytoplasm</keyword>
<keyword id="KW-0368">Histidine biosynthesis</keyword>
<keyword id="KW-0456">Lyase</keyword>
<keyword id="KW-1185">Reference proteome</keyword>